<protein>
    <recommendedName>
        <fullName evidence="1">Bis(5'-nucleosyl)-tetraphosphatase, symmetrical</fullName>
        <ecNumber evidence="1">3.6.1.41</ecNumber>
    </recommendedName>
    <alternativeName>
        <fullName evidence="1">Ap4A hydrolase</fullName>
    </alternativeName>
    <alternativeName>
        <fullName evidence="1">Diadenosine 5',5'''-P1,P4-tetraphosphate pyrophosphohydrolase</fullName>
    </alternativeName>
    <alternativeName>
        <fullName evidence="1">Diadenosine tetraphosphatase</fullName>
    </alternativeName>
</protein>
<organism>
    <name type="scientific">Salmonella agona (strain SL483)</name>
    <dbReference type="NCBI Taxonomy" id="454166"/>
    <lineage>
        <taxon>Bacteria</taxon>
        <taxon>Pseudomonadati</taxon>
        <taxon>Pseudomonadota</taxon>
        <taxon>Gammaproteobacteria</taxon>
        <taxon>Enterobacterales</taxon>
        <taxon>Enterobacteriaceae</taxon>
        <taxon>Salmonella</taxon>
    </lineage>
</organism>
<dbReference type="EC" id="3.6.1.41" evidence="1"/>
<dbReference type="EMBL" id="CP001138">
    <property type="protein sequence ID" value="ACH52622.1"/>
    <property type="molecule type" value="Genomic_DNA"/>
</dbReference>
<dbReference type="RefSeq" id="WP_000257211.1">
    <property type="nucleotide sequence ID" value="NC_011149.1"/>
</dbReference>
<dbReference type="SMR" id="B5F769"/>
<dbReference type="KEGG" id="sea:SeAg_B0097"/>
<dbReference type="HOGENOM" id="CLU_056184_2_0_6"/>
<dbReference type="Proteomes" id="UP000008819">
    <property type="component" value="Chromosome"/>
</dbReference>
<dbReference type="GO" id="GO:0008803">
    <property type="term" value="F:bis(5'-nucleosyl)-tetraphosphatase (symmetrical) activity"/>
    <property type="evidence" value="ECO:0007669"/>
    <property type="project" value="UniProtKB-UniRule"/>
</dbReference>
<dbReference type="CDD" id="cd07422">
    <property type="entry name" value="MPP_ApaH"/>
    <property type="match status" value="1"/>
</dbReference>
<dbReference type="FunFam" id="3.60.21.10:FF:000013">
    <property type="entry name" value="Bis(5'-nucleosyl)-tetraphosphatase, symmetrical"/>
    <property type="match status" value="1"/>
</dbReference>
<dbReference type="Gene3D" id="3.60.21.10">
    <property type="match status" value="1"/>
</dbReference>
<dbReference type="HAMAP" id="MF_00199">
    <property type="entry name" value="ApaH"/>
    <property type="match status" value="1"/>
</dbReference>
<dbReference type="InterPro" id="IPR004617">
    <property type="entry name" value="ApaH"/>
</dbReference>
<dbReference type="InterPro" id="IPR004843">
    <property type="entry name" value="Calcineurin-like_PHP_ApaH"/>
</dbReference>
<dbReference type="InterPro" id="IPR029052">
    <property type="entry name" value="Metallo-depent_PP-like"/>
</dbReference>
<dbReference type="NCBIfam" id="TIGR00668">
    <property type="entry name" value="apaH"/>
    <property type="match status" value="1"/>
</dbReference>
<dbReference type="NCBIfam" id="NF001204">
    <property type="entry name" value="PRK00166.1"/>
    <property type="match status" value="1"/>
</dbReference>
<dbReference type="PANTHER" id="PTHR40942">
    <property type="match status" value="1"/>
</dbReference>
<dbReference type="PANTHER" id="PTHR40942:SF4">
    <property type="entry name" value="CYTOCHROME C5"/>
    <property type="match status" value="1"/>
</dbReference>
<dbReference type="Pfam" id="PF00149">
    <property type="entry name" value="Metallophos"/>
    <property type="match status" value="1"/>
</dbReference>
<dbReference type="PIRSF" id="PIRSF000903">
    <property type="entry name" value="B5n-ttraPtase_sm"/>
    <property type="match status" value="1"/>
</dbReference>
<dbReference type="SUPFAM" id="SSF56300">
    <property type="entry name" value="Metallo-dependent phosphatases"/>
    <property type="match status" value="1"/>
</dbReference>
<gene>
    <name evidence="1" type="primary">apaH</name>
    <name type="ordered locus">SeAg_B0097</name>
</gene>
<feature type="chain" id="PRO_1000099330" description="Bis(5'-nucleosyl)-tetraphosphatase, symmetrical">
    <location>
        <begin position="1"/>
        <end position="282"/>
    </location>
</feature>
<reference key="1">
    <citation type="journal article" date="2011" name="J. Bacteriol.">
        <title>Comparative genomics of 28 Salmonella enterica isolates: evidence for CRISPR-mediated adaptive sublineage evolution.</title>
        <authorList>
            <person name="Fricke W.F."/>
            <person name="Mammel M.K."/>
            <person name="McDermott P.F."/>
            <person name="Tartera C."/>
            <person name="White D.G."/>
            <person name="Leclerc J.E."/>
            <person name="Ravel J."/>
            <person name="Cebula T.A."/>
        </authorList>
    </citation>
    <scope>NUCLEOTIDE SEQUENCE [LARGE SCALE GENOMIC DNA]</scope>
    <source>
        <strain>SL483</strain>
    </source>
</reference>
<name>APAH_SALA4</name>
<accession>B5F769</accession>
<comment type="function">
    <text evidence="1">Hydrolyzes diadenosine 5',5'''-P1,P4-tetraphosphate to yield ADP.</text>
</comment>
<comment type="catalytic activity">
    <reaction evidence="1">
        <text>P(1),P(4)-bis(5'-adenosyl) tetraphosphate + H2O = 2 ADP + 2 H(+)</text>
        <dbReference type="Rhea" id="RHEA:24252"/>
        <dbReference type="ChEBI" id="CHEBI:15377"/>
        <dbReference type="ChEBI" id="CHEBI:15378"/>
        <dbReference type="ChEBI" id="CHEBI:58141"/>
        <dbReference type="ChEBI" id="CHEBI:456216"/>
        <dbReference type="EC" id="3.6.1.41"/>
    </reaction>
</comment>
<comment type="similarity">
    <text evidence="1">Belongs to the Ap4A hydrolase family.</text>
</comment>
<proteinExistence type="inferred from homology"/>
<sequence length="282" mass="31431">MATYLIGDVHGCYDELIALLQQVEFTPDTDTLWLTGDLVARGPGSLDVLRYVKSLGNSVRLVLGNHDLHLLAVFAGISRNKPKDRLTPLLEAPDADELLNWLRRQPLLQVDEEKKLVMAHAGITPQWDLQTAKECARDVEAVLSSDSYPFFLDAMYGDMPNNWSPELSGLARLRFITNAFTRMRYCFPNGQLDMYSKASPENAPAPLKPWFAIPGPVSEAYSIAFGHWASLEGKGTPEGIYALDTGCCWGGELTCLRWEDKQYFVQPSNRQMDMGEGEAVNA</sequence>
<evidence type="ECO:0000255" key="1">
    <source>
        <dbReference type="HAMAP-Rule" id="MF_00199"/>
    </source>
</evidence>
<keyword id="KW-0378">Hydrolase</keyword>